<reference key="1">
    <citation type="journal article" date="2008" name="J. Bacteriol.">
        <title>Genome sequence of the fish pathogen Renibacterium salmoninarum suggests reductive evolution away from an environmental Arthrobacter ancestor.</title>
        <authorList>
            <person name="Wiens G.D."/>
            <person name="Rockey D.D."/>
            <person name="Wu Z."/>
            <person name="Chang J."/>
            <person name="Levy R."/>
            <person name="Crane S."/>
            <person name="Chen D.S."/>
            <person name="Capri G.R."/>
            <person name="Burnett J.R."/>
            <person name="Sudheesh P.S."/>
            <person name="Schipma M.J."/>
            <person name="Burd H."/>
            <person name="Bhattacharyya A."/>
            <person name="Rhodes L.D."/>
            <person name="Kaul R."/>
            <person name="Strom M.S."/>
        </authorList>
    </citation>
    <scope>NUCLEOTIDE SEQUENCE [LARGE SCALE GENOMIC DNA]</scope>
    <source>
        <strain>ATCC 33209 / DSM 20767 / JCM 11484 / NBRC 15589 / NCIMB 2235</strain>
    </source>
</reference>
<name>MSHC_RENSM</name>
<keyword id="KW-0067">ATP-binding</keyword>
<keyword id="KW-0436">Ligase</keyword>
<keyword id="KW-0479">Metal-binding</keyword>
<keyword id="KW-0547">Nucleotide-binding</keyword>
<keyword id="KW-1185">Reference proteome</keyword>
<keyword id="KW-0862">Zinc</keyword>
<evidence type="ECO:0000255" key="1">
    <source>
        <dbReference type="HAMAP-Rule" id="MF_01697"/>
    </source>
</evidence>
<organism>
    <name type="scientific">Renibacterium salmoninarum (strain ATCC 33209 / DSM 20767 / JCM 11484 / NBRC 15589 / NCIMB 2235)</name>
    <dbReference type="NCBI Taxonomy" id="288705"/>
    <lineage>
        <taxon>Bacteria</taxon>
        <taxon>Bacillati</taxon>
        <taxon>Actinomycetota</taxon>
        <taxon>Actinomycetes</taxon>
        <taxon>Micrococcales</taxon>
        <taxon>Micrococcaceae</taxon>
        <taxon>Renibacterium</taxon>
    </lineage>
</organism>
<comment type="function">
    <text evidence="1">Catalyzes the ATP-dependent condensation of GlcN-Ins and L-cysteine to form L-Cys-GlcN-Ins.</text>
</comment>
<comment type="catalytic activity">
    <reaction evidence="1">
        <text>1D-myo-inositol 2-amino-2-deoxy-alpha-D-glucopyranoside + L-cysteine + ATP = 1D-myo-inositol 2-(L-cysteinylamino)-2-deoxy-alpha-D-glucopyranoside + AMP + diphosphate + H(+)</text>
        <dbReference type="Rhea" id="RHEA:26176"/>
        <dbReference type="ChEBI" id="CHEBI:15378"/>
        <dbReference type="ChEBI" id="CHEBI:30616"/>
        <dbReference type="ChEBI" id="CHEBI:33019"/>
        <dbReference type="ChEBI" id="CHEBI:35235"/>
        <dbReference type="ChEBI" id="CHEBI:58886"/>
        <dbReference type="ChEBI" id="CHEBI:58887"/>
        <dbReference type="ChEBI" id="CHEBI:456215"/>
        <dbReference type="EC" id="6.3.1.13"/>
    </reaction>
</comment>
<comment type="cofactor">
    <cofactor evidence="1">
        <name>Zn(2+)</name>
        <dbReference type="ChEBI" id="CHEBI:29105"/>
    </cofactor>
    <text evidence="1">Binds 1 zinc ion per subunit.</text>
</comment>
<comment type="subunit">
    <text evidence="1">Monomer.</text>
</comment>
<comment type="similarity">
    <text evidence="1">Belongs to the class-I aminoacyl-tRNA synthetase family. MshC subfamily.</text>
</comment>
<gene>
    <name evidence="1" type="primary">mshC</name>
    <name type="ordered locus">RSal33209_2044</name>
</gene>
<feature type="chain" id="PRO_0000400474" description="L-cysteine:1D-myo-inositol 2-amino-2-deoxy-alpha-D-glucopyranoside ligase">
    <location>
        <begin position="1"/>
        <end position="423"/>
    </location>
</feature>
<feature type="short sequence motif" description="'HIGH' region" evidence="1">
    <location>
        <begin position="45"/>
        <end position="55"/>
    </location>
</feature>
<feature type="short sequence motif" description="'ERGGDP' region" evidence="1">
    <location>
        <begin position="199"/>
        <end position="204"/>
    </location>
</feature>
<feature type="short sequence motif" description="'KMSKS' region" evidence="1">
    <location>
        <begin position="301"/>
        <end position="305"/>
    </location>
</feature>
<feature type="binding site" evidence="1">
    <location>
        <begin position="43"/>
        <end position="46"/>
    </location>
    <ligand>
        <name>L-cysteinyl-5'-AMP</name>
        <dbReference type="ChEBI" id="CHEBI:144924"/>
    </ligand>
</feature>
<feature type="binding site" evidence="1">
    <location>
        <position position="43"/>
    </location>
    <ligand>
        <name>Zn(2+)</name>
        <dbReference type="ChEBI" id="CHEBI:29105"/>
    </ligand>
</feature>
<feature type="binding site" evidence="1">
    <location>
        <position position="58"/>
    </location>
    <ligand>
        <name>L-cysteinyl-5'-AMP</name>
        <dbReference type="ChEBI" id="CHEBI:144924"/>
    </ligand>
</feature>
<feature type="binding site" evidence="1">
    <location>
        <begin position="81"/>
        <end position="83"/>
    </location>
    <ligand>
        <name>L-cysteinyl-5'-AMP</name>
        <dbReference type="ChEBI" id="CHEBI:144924"/>
    </ligand>
</feature>
<feature type="binding site" evidence="1">
    <location>
        <position position="240"/>
    </location>
    <ligand>
        <name>L-cysteinyl-5'-AMP</name>
        <dbReference type="ChEBI" id="CHEBI:144924"/>
    </ligand>
</feature>
<feature type="binding site" evidence="1">
    <location>
        <position position="244"/>
    </location>
    <ligand>
        <name>Zn(2+)</name>
        <dbReference type="ChEBI" id="CHEBI:29105"/>
    </ligand>
</feature>
<feature type="binding site" evidence="1">
    <location>
        <begin position="262"/>
        <end position="264"/>
    </location>
    <ligand>
        <name>L-cysteinyl-5'-AMP</name>
        <dbReference type="ChEBI" id="CHEBI:144924"/>
    </ligand>
</feature>
<feature type="binding site" evidence="1">
    <location>
        <position position="269"/>
    </location>
    <ligand>
        <name>Zn(2+)</name>
        <dbReference type="ChEBI" id="CHEBI:29105"/>
    </ligand>
</feature>
<feature type="binding site" evidence="1">
    <location>
        <position position="295"/>
    </location>
    <ligand>
        <name>L-cysteinyl-5'-AMP</name>
        <dbReference type="ChEBI" id="CHEBI:144924"/>
    </ligand>
</feature>
<sequence length="423" mass="45829">MKSWSTRPLPQLPGNIEAPQLFDSASKTLRALPVAADASLYVCGITPYDATHMGHAATYLAFDLLGRVWRDSGASVNYVQNVTDIDDPLLERADRDGVDWRELAESQIELFRADMTALNVIAPQQYIGAIEAIQWIVPAVEELIAEGFAYRMDSGDVYFDTVAASVKTPDSSNAGELGAWWLGQISGLSPEEMLPVFAERGGDPERDGKRNPLDPLLWRVERAGEPAWPGASLGDGRPGWHIECTVIARKFLPAPFSVQGGGSDLLFPHHEMGDGHAWALDHTPLAKHYAHAGMVGLDGEKMSKSRGNLVLVSALRAEGVDPMAVRLSILANHYRSDWSWTAELLERSKLRLAQWRAAMEHTSVGSAAQLVSEIRTALAADLDAPTALNAVDNWVGQKATTEHSALDAALASDAIEALLGVVL</sequence>
<protein>
    <recommendedName>
        <fullName evidence="1">L-cysteine:1D-myo-inositol 2-amino-2-deoxy-alpha-D-glucopyranoside ligase</fullName>
        <shortName evidence="1">L-Cys:GlcN-Ins ligase</shortName>
        <ecNumber evidence="1">6.3.1.13</ecNumber>
    </recommendedName>
    <alternativeName>
        <fullName evidence="1">Mycothiol ligase</fullName>
        <shortName evidence="1">MSH ligase</shortName>
    </alternativeName>
</protein>
<proteinExistence type="inferred from homology"/>
<dbReference type="EC" id="6.3.1.13" evidence="1"/>
<dbReference type="EMBL" id="CP000910">
    <property type="protein sequence ID" value="ABY23777.1"/>
    <property type="molecule type" value="Genomic_DNA"/>
</dbReference>
<dbReference type="RefSeq" id="WP_012245447.1">
    <property type="nucleotide sequence ID" value="NC_010168.1"/>
</dbReference>
<dbReference type="SMR" id="A9WSI9"/>
<dbReference type="STRING" id="288705.RSal33209_2044"/>
<dbReference type="KEGG" id="rsa:RSal33209_2044"/>
<dbReference type="eggNOG" id="COG0215">
    <property type="taxonomic scope" value="Bacteria"/>
</dbReference>
<dbReference type="HOGENOM" id="CLU_013528_0_0_11"/>
<dbReference type="Proteomes" id="UP000002007">
    <property type="component" value="Chromosome"/>
</dbReference>
<dbReference type="GO" id="GO:0005829">
    <property type="term" value="C:cytosol"/>
    <property type="evidence" value="ECO:0007669"/>
    <property type="project" value="TreeGrafter"/>
</dbReference>
<dbReference type="GO" id="GO:0005524">
    <property type="term" value="F:ATP binding"/>
    <property type="evidence" value="ECO:0007669"/>
    <property type="project" value="UniProtKB-KW"/>
</dbReference>
<dbReference type="GO" id="GO:0035446">
    <property type="term" value="F:cysteine-glucosaminylinositol ligase activity"/>
    <property type="evidence" value="ECO:0007669"/>
    <property type="project" value="UniProtKB-UniRule"/>
</dbReference>
<dbReference type="GO" id="GO:0004817">
    <property type="term" value="F:cysteine-tRNA ligase activity"/>
    <property type="evidence" value="ECO:0007669"/>
    <property type="project" value="TreeGrafter"/>
</dbReference>
<dbReference type="GO" id="GO:0008270">
    <property type="term" value="F:zinc ion binding"/>
    <property type="evidence" value="ECO:0007669"/>
    <property type="project" value="UniProtKB-UniRule"/>
</dbReference>
<dbReference type="GO" id="GO:0006423">
    <property type="term" value="P:cysteinyl-tRNA aminoacylation"/>
    <property type="evidence" value="ECO:0007669"/>
    <property type="project" value="TreeGrafter"/>
</dbReference>
<dbReference type="GO" id="GO:0010125">
    <property type="term" value="P:mycothiol biosynthetic process"/>
    <property type="evidence" value="ECO:0007669"/>
    <property type="project" value="UniProtKB-UniRule"/>
</dbReference>
<dbReference type="Gene3D" id="1.20.120.640">
    <property type="entry name" value="Anticodon-binding domain of a subclass of class I aminoacyl-tRNA synthetases"/>
    <property type="match status" value="1"/>
</dbReference>
<dbReference type="Gene3D" id="3.40.50.620">
    <property type="entry name" value="HUPs"/>
    <property type="match status" value="1"/>
</dbReference>
<dbReference type="HAMAP" id="MF_01697">
    <property type="entry name" value="MshC"/>
    <property type="match status" value="1"/>
</dbReference>
<dbReference type="InterPro" id="IPR024909">
    <property type="entry name" value="Cys-tRNA/MSH_ligase"/>
</dbReference>
<dbReference type="InterPro" id="IPR017812">
    <property type="entry name" value="Mycothiol_ligase_MshC"/>
</dbReference>
<dbReference type="InterPro" id="IPR014729">
    <property type="entry name" value="Rossmann-like_a/b/a_fold"/>
</dbReference>
<dbReference type="InterPro" id="IPR032678">
    <property type="entry name" value="tRNA-synt_1_cat_dom"/>
</dbReference>
<dbReference type="NCBIfam" id="TIGR03447">
    <property type="entry name" value="mycothiol_MshC"/>
    <property type="match status" value="1"/>
</dbReference>
<dbReference type="PANTHER" id="PTHR10890:SF3">
    <property type="entry name" value="CYSTEINE--TRNA LIGASE, CYTOPLASMIC"/>
    <property type="match status" value="1"/>
</dbReference>
<dbReference type="PANTHER" id="PTHR10890">
    <property type="entry name" value="CYSTEINYL-TRNA SYNTHETASE"/>
    <property type="match status" value="1"/>
</dbReference>
<dbReference type="Pfam" id="PF01406">
    <property type="entry name" value="tRNA-synt_1e"/>
    <property type="match status" value="1"/>
</dbReference>
<dbReference type="PRINTS" id="PR00983">
    <property type="entry name" value="TRNASYNTHCYS"/>
</dbReference>
<dbReference type="SUPFAM" id="SSF52374">
    <property type="entry name" value="Nucleotidylyl transferase"/>
    <property type="match status" value="1"/>
</dbReference>
<accession>A9WSI9</accession>